<proteinExistence type="predicted"/>
<feature type="chain" id="PRO_0000128112" description="Uncharacterized protein AF_2174">
    <location>
        <begin position="1"/>
        <end position="33"/>
    </location>
</feature>
<accession>O28108</accession>
<dbReference type="EMBL" id="AE000782">
    <property type="protein sequence ID" value="AAB89090.1"/>
    <property type="molecule type" value="Genomic_DNA"/>
</dbReference>
<dbReference type="PIR" id="F69521">
    <property type="entry name" value="F69521"/>
</dbReference>
<dbReference type="PaxDb" id="224325-AF_2174"/>
<dbReference type="EnsemblBacteria" id="AAB89090">
    <property type="protein sequence ID" value="AAB89090"/>
    <property type="gene ID" value="AF_2174"/>
</dbReference>
<dbReference type="KEGG" id="afu:AF_2174"/>
<dbReference type="HOGENOM" id="CLU_3379829_0_0_2"/>
<dbReference type="Proteomes" id="UP000002199">
    <property type="component" value="Chromosome"/>
</dbReference>
<protein>
    <recommendedName>
        <fullName>Uncharacterized protein AF_2174</fullName>
    </recommendedName>
</protein>
<reference key="1">
    <citation type="journal article" date="1997" name="Nature">
        <title>The complete genome sequence of the hyperthermophilic, sulphate-reducing archaeon Archaeoglobus fulgidus.</title>
        <authorList>
            <person name="Klenk H.-P."/>
            <person name="Clayton R.A."/>
            <person name="Tomb J.-F."/>
            <person name="White O."/>
            <person name="Nelson K.E."/>
            <person name="Ketchum K.A."/>
            <person name="Dodson R.J."/>
            <person name="Gwinn M.L."/>
            <person name="Hickey E.K."/>
            <person name="Peterson J.D."/>
            <person name="Richardson D.L."/>
            <person name="Kerlavage A.R."/>
            <person name="Graham D.E."/>
            <person name="Kyrpides N.C."/>
            <person name="Fleischmann R.D."/>
            <person name="Quackenbush J."/>
            <person name="Lee N.H."/>
            <person name="Sutton G.G."/>
            <person name="Gill S.R."/>
            <person name="Kirkness E.F."/>
            <person name="Dougherty B.A."/>
            <person name="McKenney K."/>
            <person name="Adams M.D."/>
            <person name="Loftus B.J."/>
            <person name="Peterson S.N."/>
            <person name="Reich C.I."/>
            <person name="McNeil L.K."/>
            <person name="Badger J.H."/>
            <person name="Glodek A."/>
            <person name="Zhou L."/>
            <person name="Overbeek R."/>
            <person name="Gocayne J.D."/>
            <person name="Weidman J.F."/>
            <person name="McDonald L.A."/>
            <person name="Utterback T.R."/>
            <person name="Cotton M.D."/>
            <person name="Spriggs T."/>
            <person name="Artiach P."/>
            <person name="Kaine B.P."/>
            <person name="Sykes S.M."/>
            <person name="Sadow P.W."/>
            <person name="D'Andrea K.P."/>
            <person name="Bowman C."/>
            <person name="Fujii C."/>
            <person name="Garland S.A."/>
            <person name="Mason T.M."/>
            <person name="Olsen G.J."/>
            <person name="Fraser C.M."/>
            <person name="Smith H.O."/>
            <person name="Woese C.R."/>
            <person name="Venter J.C."/>
        </authorList>
    </citation>
    <scope>NUCLEOTIDE SEQUENCE [LARGE SCALE GENOMIC DNA]</scope>
    <source>
        <strain>ATCC 49558 / DSM 4304 / JCM 9628 / NBRC 100126 / VC-16</strain>
    </source>
</reference>
<name>Y2174_ARCFU</name>
<organism>
    <name type="scientific">Archaeoglobus fulgidus (strain ATCC 49558 / DSM 4304 / JCM 9628 / NBRC 100126 / VC-16)</name>
    <dbReference type="NCBI Taxonomy" id="224325"/>
    <lineage>
        <taxon>Archaea</taxon>
        <taxon>Methanobacteriati</taxon>
        <taxon>Methanobacteriota</taxon>
        <taxon>Archaeoglobi</taxon>
        <taxon>Archaeoglobales</taxon>
        <taxon>Archaeoglobaceae</taxon>
        <taxon>Archaeoglobus</taxon>
    </lineage>
</organism>
<gene>
    <name type="ordered locus">AF_2174</name>
</gene>
<sequence>MLFEIFEELEINREIRNLAYEFVKKMVYCQMTL</sequence>
<keyword id="KW-1185">Reference proteome</keyword>